<keyword id="KW-0285">Flavoprotein</keyword>
<keyword id="KW-0288">FMN</keyword>
<keyword id="KW-0520">NAD</keyword>
<keyword id="KW-0560">Oxidoreductase</keyword>
<dbReference type="EC" id="1.6.5.-" evidence="1"/>
<dbReference type="EC" id="1.7.1.17" evidence="1"/>
<dbReference type="EMBL" id="CP000578">
    <property type="protein sequence ID" value="ABN78554.1"/>
    <property type="molecule type" value="Genomic_DNA"/>
</dbReference>
<dbReference type="RefSeq" id="WP_011842377.1">
    <property type="nucleotide sequence ID" value="NC_009050.1"/>
</dbReference>
<dbReference type="SMR" id="A3PQD8"/>
<dbReference type="KEGG" id="rsh:Rsph17029_3461"/>
<dbReference type="HOGENOM" id="CLU_088964_0_0_5"/>
<dbReference type="GO" id="GO:0009055">
    <property type="term" value="F:electron transfer activity"/>
    <property type="evidence" value="ECO:0007669"/>
    <property type="project" value="UniProtKB-UniRule"/>
</dbReference>
<dbReference type="GO" id="GO:0010181">
    <property type="term" value="F:FMN binding"/>
    <property type="evidence" value="ECO:0007669"/>
    <property type="project" value="UniProtKB-UniRule"/>
</dbReference>
<dbReference type="GO" id="GO:0016652">
    <property type="term" value="F:oxidoreductase activity, acting on NAD(P)H as acceptor"/>
    <property type="evidence" value="ECO:0007669"/>
    <property type="project" value="UniProtKB-UniRule"/>
</dbReference>
<dbReference type="GO" id="GO:0016655">
    <property type="term" value="F:oxidoreductase activity, acting on NAD(P)H, quinone or similar compound as acceptor"/>
    <property type="evidence" value="ECO:0007669"/>
    <property type="project" value="InterPro"/>
</dbReference>
<dbReference type="Gene3D" id="3.40.50.360">
    <property type="match status" value="1"/>
</dbReference>
<dbReference type="HAMAP" id="MF_01216">
    <property type="entry name" value="Azoreductase_type1"/>
    <property type="match status" value="1"/>
</dbReference>
<dbReference type="InterPro" id="IPR003680">
    <property type="entry name" value="Flavodoxin_fold"/>
</dbReference>
<dbReference type="InterPro" id="IPR029039">
    <property type="entry name" value="Flavoprotein-like_sf"/>
</dbReference>
<dbReference type="InterPro" id="IPR050104">
    <property type="entry name" value="FMN-dep_NADH:Q_OxRdtase_AzoR1"/>
</dbReference>
<dbReference type="InterPro" id="IPR023048">
    <property type="entry name" value="NADH:quinone_OxRdtase_FMN_depd"/>
</dbReference>
<dbReference type="PANTHER" id="PTHR43741">
    <property type="entry name" value="FMN-DEPENDENT NADH-AZOREDUCTASE 1"/>
    <property type="match status" value="1"/>
</dbReference>
<dbReference type="PANTHER" id="PTHR43741:SF2">
    <property type="entry name" value="FMN-DEPENDENT NADH:QUINONE OXIDOREDUCTASE"/>
    <property type="match status" value="1"/>
</dbReference>
<dbReference type="Pfam" id="PF02525">
    <property type="entry name" value="Flavodoxin_2"/>
    <property type="match status" value="1"/>
</dbReference>
<dbReference type="SUPFAM" id="SSF52218">
    <property type="entry name" value="Flavoproteins"/>
    <property type="match status" value="1"/>
</dbReference>
<feature type="chain" id="PRO_1000066518" description="FMN-dependent NADH:quinone oxidoreductase">
    <location>
        <begin position="1"/>
        <end position="196"/>
    </location>
</feature>
<feature type="binding site" evidence="1">
    <location>
        <position position="10"/>
    </location>
    <ligand>
        <name>FMN</name>
        <dbReference type="ChEBI" id="CHEBI:58210"/>
    </ligand>
</feature>
<accession>A3PQD8</accession>
<reference key="1">
    <citation type="submission" date="2007-02" db="EMBL/GenBank/DDBJ databases">
        <title>Complete sequence of chromosome 2 of Rhodobacter sphaeroides ATCC 17029.</title>
        <authorList>
            <person name="Copeland A."/>
            <person name="Lucas S."/>
            <person name="Lapidus A."/>
            <person name="Barry K."/>
            <person name="Detter J.C."/>
            <person name="Glavina del Rio T."/>
            <person name="Hammon N."/>
            <person name="Israni S."/>
            <person name="Dalin E."/>
            <person name="Tice H."/>
            <person name="Pitluck S."/>
            <person name="Kiss H."/>
            <person name="Brettin T."/>
            <person name="Bruce D."/>
            <person name="Han C."/>
            <person name="Tapia R."/>
            <person name="Gilna P."/>
            <person name="Schmutz J."/>
            <person name="Larimer F."/>
            <person name="Land M."/>
            <person name="Hauser L."/>
            <person name="Kyrpides N."/>
            <person name="Mikhailova N."/>
            <person name="Richardson P."/>
            <person name="Mackenzie C."/>
            <person name="Choudhary M."/>
            <person name="Donohue T.J."/>
            <person name="Kaplan S."/>
        </authorList>
    </citation>
    <scope>NUCLEOTIDE SEQUENCE [LARGE SCALE GENOMIC DNA]</scope>
    <source>
        <strain>ATCC 17029 / ATH 2.4.9</strain>
    </source>
</reference>
<proteinExistence type="inferred from homology"/>
<sequence length="196" mass="21001">MTTILRIDSSIKGEAAVSRRLTQRILDRLLEAHPDATVVSRDLAQGIRQIDGPWLGSVFTAPEQRTADQQEIARTADAVMAEVKEADILVIALPVYNFGAPAQLKSWVDHIARRGESFVYTETGPVGLLTGKRAIVAFTSDGTPLGSELDHASGWLRQVLGFVGITDVDFVAADRMVFGADEAMARAEAAVAALAA</sequence>
<gene>
    <name evidence="1" type="primary">azoR</name>
    <name type="ordered locus">Rsph17029_3461</name>
</gene>
<protein>
    <recommendedName>
        <fullName evidence="1">FMN-dependent NADH:quinone oxidoreductase</fullName>
        <ecNumber evidence="1">1.6.5.-</ecNumber>
    </recommendedName>
    <alternativeName>
        <fullName evidence="1">Azo-dye reductase</fullName>
    </alternativeName>
    <alternativeName>
        <fullName evidence="1">FMN-dependent NADH-azo compound oxidoreductase</fullName>
    </alternativeName>
    <alternativeName>
        <fullName evidence="1">FMN-dependent NADH-azoreductase</fullName>
        <ecNumber evidence="1">1.7.1.17</ecNumber>
    </alternativeName>
</protein>
<organism>
    <name type="scientific">Cereibacter sphaeroides (strain ATCC 17029 / ATH 2.4.9)</name>
    <name type="common">Rhodobacter sphaeroides</name>
    <dbReference type="NCBI Taxonomy" id="349101"/>
    <lineage>
        <taxon>Bacteria</taxon>
        <taxon>Pseudomonadati</taxon>
        <taxon>Pseudomonadota</taxon>
        <taxon>Alphaproteobacteria</taxon>
        <taxon>Rhodobacterales</taxon>
        <taxon>Paracoccaceae</taxon>
        <taxon>Cereibacter</taxon>
    </lineage>
</organism>
<evidence type="ECO:0000255" key="1">
    <source>
        <dbReference type="HAMAP-Rule" id="MF_01216"/>
    </source>
</evidence>
<comment type="function">
    <text evidence="1">Quinone reductase that provides resistance to thiol-specific stress caused by electrophilic quinones.</text>
</comment>
<comment type="function">
    <text evidence="1">Also exhibits azoreductase activity. Catalyzes the reductive cleavage of the azo bond in aromatic azo compounds to the corresponding amines.</text>
</comment>
<comment type="catalytic activity">
    <reaction evidence="1">
        <text>2 a quinone + NADH + H(+) = 2 a 1,4-benzosemiquinone + NAD(+)</text>
        <dbReference type="Rhea" id="RHEA:65952"/>
        <dbReference type="ChEBI" id="CHEBI:15378"/>
        <dbReference type="ChEBI" id="CHEBI:57540"/>
        <dbReference type="ChEBI" id="CHEBI:57945"/>
        <dbReference type="ChEBI" id="CHEBI:132124"/>
        <dbReference type="ChEBI" id="CHEBI:134225"/>
    </reaction>
</comment>
<comment type="catalytic activity">
    <reaction evidence="1">
        <text>N,N-dimethyl-1,4-phenylenediamine + anthranilate + 2 NAD(+) = 2-(4-dimethylaminophenyl)diazenylbenzoate + 2 NADH + 2 H(+)</text>
        <dbReference type="Rhea" id="RHEA:55872"/>
        <dbReference type="ChEBI" id="CHEBI:15378"/>
        <dbReference type="ChEBI" id="CHEBI:15783"/>
        <dbReference type="ChEBI" id="CHEBI:16567"/>
        <dbReference type="ChEBI" id="CHEBI:57540"/>
        <dbReference type="ChEBI" id="CHEBI:57945"/>
        <dbReference type="ChEBI" id="CHEBI:71579"/>
        <dbReference type="EC" id="1.7.1.17"/>
    </reaction>
</comment>
<comment type="cofactor">
    <cofactor evidence="1">
        <name>FMN</name>
        <dbReference type="ChEBI" id="CHEBI:58210"/>
    </cofactor>
    <text evidence="1">Binds 1 FMN per subunit.</text>
</comment>
<comment type="subunit">
    <text evidence="1">Homodimer.</text>
</comment>
<comment type="similarity">
    <text evidence="1">Belongs to the azoreductase type 1 family.</text>
</comment>
<name>AZOR_CERS1</name>